<name>ORF2_TTVT1</name>
<organism>
    <name type="scientific">Torque teno canis virus (isolate Cf-TTV10)</name>
    <dbReference type="NCBI Taxonomy" id="766189"/>
    <lineage>
        <taxon>Viruses</taxon>
        <taxon>Viruses incertae sedis</taxon>
        <taxon>Anelloviridae</taxon>
        <taxon>Thetatorquevirus</taxon>
        <taxon>Thetatorquevirus canid1</taxon>
    </lineage>
</organism>
<dbReference type="EMBL" id="AB076002">
    <property type="protein sequence ID" value="BAB90850.1"/>
    <property type="molecule type" value="Genomic_DNA"/>
</dbReference>
<dbReference type="RefSeq" id="YP_003587833.1">
    <property type="nucleotide sequence ID" value="NC_014071.1"/>
</dbReference>
<dbReference type="KEGG" id="vg:9086577"/>
<dbReference type="Proteomes" id="UP000001295">
    <property type="component" value="Segment"/>
</dbReference>
<reference key="1">
    <citation type="journal article" date="2002" name="J. Gen. Virol.">
        <title>Genomic characterization of TT viruses (TTVs) in pigs, cats and dogs and their relatedness with species-specific TTVs in primates and tupaias.</title>
        <authorList>
            <person name="Okamoto H."/>
            <person name="Takahashi M."/>
            <person name="Nishizawa T."/>
            <person name="Tawara A."/>
            <person name="Fukai K."/>
            <person name="Muramatsu U."/>
            <person name="Naito Y."/>
            <person name="Yoshikawa A."/>
        </authorList>
    </citation>
    <scope>NUCLEOTIDE SEQUENCE [GENOMIC DNA]</scope>
</reference>
<proteinExistence type="predicted"/>
<evidence type="ECO:0000256" key="1">
    <source>
        <dbReference type="SAM" id="MobiDB-lite"/>
    </source>
</evidence>
<sequence length="101" mass="11077">MSDEGYRELVESKSAPTTPGPWSPDRERWKRHEAAWKQHCSWSHGLWCHCHDWTRHLKKETRECGSGTESGEDPAVSFDLVDDAAMLAAAGDAEPGAAGGG</sequence>
<organismHost>
    <name type="scientific">Canis lupus familiaris</name>
    <name type="common">Dog</name>
    <name type="synonym">Canis familiaris</name>
    <dbReference type="NCBI Taxonomy" id="9615"/>
</organismHost>
<gene>
    <name type="ORF">ORF1</name>
</gene>
<accession>Q8QVL7</accession>
<protein>
    <recommendedName>
        <fullName>Uncharacterized ORF2 protein</fullName>
    </recommendedName>
</protein>
<keyword id="KW-1185">Reference proteome</keyword>
<feature type="chain" id="PRO_0000404285" description="Uncharacterized ORF2 protein">
    <location>
        <begin position="1"/>
        <end position="101"/>
    </location>
</feature>
<feature type="region of interest" description="Disordered" evidence="1">
    <location>
        <begin position="1"/>
        <end position="26"/>
    </location>
</feature>
<feature type="compositionally biased region" description="Basic and acidic residues" evidence="1">
    <location>
        <begin position="1"/>
        <end position="11"/>
    </location>
</feature>